<sequence length="415" mass="44905">MRFIFPTIAVLLEASMIVLFGFFVKYETEQNAIQQPNSTNSTKVDRSLELYPLFQDVHVMIFVGFGFLMTFLKKYGFSSVGINLLIAALGLQWGTFVQGMVHRHGQTIYIGIKNMINADFSTATVLISFGAVLGKISPTQMLIMTIIEITVFAGNEYVVGEIFQASDIGASMTIHAFGAYFGLAVAGVLYRTGLRKGHEKEESEYHSDLFAMIGTLFLWMFWPSFNSAIAETAEEQYLAIINTYLSLVACVLTAYAMSSLVGHRGKLDMVHIQNATLAGGVAVGTCADMKIHPYGSLIIGSIAGMVSVLGFRFLTPCLTAKLRIHDTCGVHNLHGLPGVVGGLSSIVAILLGVSTASSMTMQAAALGSSIGSAIAGGLITGLILRFIVRGQPSKDNFFDDSVYWEVPKEKELDNV</sequence>
<proteinExistence type="evidence at transcript level"/>
<keyword id="KW-0924">Ammonia transport</keyword>
<keyword id="KW-0325">Glycoprotein</keyword>
<keyword id="KW-0472">Membrane</keyword>
<keyword id="KW-1185">Reference proteome</keyword>
<keyword id="KW-0812">Transmembrane</keyword>
<keyword id="KW-1133">Transmembrane helix</keyword>
<keyword id="KW-0813">Transport</keyword>
<gene>
    <name evidence="1" type="primary">RHAG</name>
</gene>
<dbReference type="EMBL" id="AY831677">
    <property type="protein sequence ID" value="AAX39719.1"/>
    <property type="molecule type" value="mRNA"/>
</dbReference>
<dbReference type="RefSeq" id="NP_001104238.1">
    <property type="nucleotide sequence ID" value="NM_001110768.1"/>
</dbReference>
<dbReference type="SMR" id="Q3BCQ5"/>
<dbReference type="FunCoup" id="Q3BCQ5">
    <property type="interactions" value="12"/>
</dbReference>
<dbReference type="STRING" id="9615.ENSCAFP00000040637"/>
<dbReference type="GlyCosmos" id="Q3BCQ5">
    <property type="glycosylation" value="2 sites, No reported glycans"/>
</dbReference>
<dbReference type="PaxDb" id="9612-ENSCAFP00000003128"/>
<dbReference type="Ensembl" id="ENSCAFT00000049913.4">
    <property type="protein sequence ID" value="ENSCAFP00000040637.1"/>
    <property type="gene ID" value="ENSCAFG00000002141.6"/>
</dbReference>
<dbReference type="GeneID" id="481833"/>
<dbReference type="KEGG" id="cfa:481833"/>
<dbReference type="CTD" id="6005"/>
<dbReference type="VGNC" id="VGNC:45542">
    <property type="gene designation" value="RHAG"/>
</dbReference>
<dbReference type="eggNOG" id="KOG3796">
    <property type="taxonomic scope" value="Eukaryota"/>
</dbReference>
<dbReference type="HOGENOM" id="CLU_021386_1_0_1"/>
<dbReference type="InParanoid" id="Q3BCQ5"/>
<dbReference type="OrthoDB" id="534912at2759"/>
<dbReference type="Proteomes" id="UP000002254">
    <property type="component" value="Chromosome 12"/>
</dbReference>
<dbReference type="Proteomes" id="UP000694429">
    <property type="component" value="Unplaced"/>
</dbReference>
<dbReference type="Proteomes" id="UP000694542">
    <property type="component" value="Unplaced"/>
</dbReference>
<dbReference type="Proteomes" id="UP000805418">
    <property type="component" value="Unplaced"/>
</dbReference>
<dbReference type="Bgee" id="ENSCAFG00000002141">
    <property type="expression patterns" value="Expressed in bone marrow and 17 other cell types or tissues"/>
</dbReference>
<dbReference type="GO" id="GO:0016020">
    <property type="term" value="C:membrane"/>
    <property type="evidence" value="ECO:0000250"/>
    <property type="project" value="UniProtKB"/>
</dbReference>
<dbReference type="GO" id="GO:0005886">
    <property type="term" value="C:plasma membrane"/>
    <property type="evidence" value="ECO:0000250"/>
    <property type="project" value="UniProtKB"/>
</dbReference>
<dbReference type="GO" id="GO:0008519">
    <property type="term" value="F:ammonium channel activity"/>
    <property type="evidence" value="ECO:0000250"/>
    <property type="project" value="UniProtKB"/>
</dbReference>
<dbReference type="GO" id="GO:0035379">
    <property type="term" value="F:carbon dioxide transmembrane transporter activity"/>
    <property type="evidence" value="ECO:0000250"/>
    <property type="project" value="UniProtKB"/>
</dbReference>
<dbReference type="GO" id="GO:0022840">
    <property type="term" value="F:leak channel activity"/>
    <property type="evidence" value="ECO:0000250"/>
    <property type="project" value="UniProtKB"/>
</dbReference>
<dbReference type="GO" id="GO:0015200">
    <property type="term" value="F:methylammonium transmembrane transporter activity"/>
    <property type="evidence" value="ECO:0000250"/>
    <property type="project" value="UniProtKB"/>
</dbReference>
<dbReference type="GO" id="GO:0097272">
    <property type="term" value="P:ammonium homeostasis"/>
    <property type="evidence" value="ECO:0000318"/>
    <property type="project" value="GO_Central"/>
</dbReference>
<dbReference type="GO" id="GO:0072488">
    <property type="term" value="P:ammonium transmembrane transport"/>
    <property type="evidence" value="ECO:0000250"/>
    <property type="project" value="UniProtKB"/>
</dbReference>
<dbReference type="GO" id="GO:0035378">
    <property type="term" value="P:carbon dioxide transmembrane transport"/>
    <property type="evidence" value="ECO:0000250"/>
    <property type="project" value="UniProtKB"/>
</dbReference>
<dbReference type="GO" id="GO:0015670">
    <property type="term" value="P:carbon dioxide transport"/>
    <property type="evidence" value="ECO:0000250"/>
    <property type="project" value="UniProtKB"/>
</dbReference>
<dbReference type="GO" id="GO:0098662">
    <property type="term" value="P:inorganic cation transmembrane transport"/>
    <property type="evidence" value="ECO:0000250"/>
    <property type="project" value="UniProtKB"/>
</dbReference>
<dbReference type="GO" id="GO:0072489">
    <property type="term" value="P:methylammonium transmembrane transport"/>
    <property type="evidence" value="ECO:0000250"/>
    <property type="project" value="UniProtKB"/>
</dbReference>
<dbReference type="FunFam" id="1.10.3430.10:FF:000001">
    <property type="entry name" value="Ammonium transporter Rh type C"/>
    <property type="match status" value="1"/>
</dbReference>
<dbReference type="Gene3D" id="1.10.3430.10">
    <property type="entry name" value="Ammonium transporter AmtB like domains"/>
    <property type="match status" value="1"/>
</dbReference>
<dbReference type="InterPro" id="IPR029020">
    <property type="entry name" value="Ammonium/urea_transptr"/>
</dbReference>
<dbReference type="InterPro" id="IPR024041">
    <property type="entry name" value="NH4_transpt_AmtB-like_dom"/>
</dbReference>
<dbReference type="InterPro" id="IPR002229">
    <property type="entry name" value="RhesusRHD"/>
</dbReference>
<dbReference type="PANTHER" id="PTHR11730">
    <property type="entry name" value="AMMONIUM TRANSPORTER"/>
    <property type="match status" value="1"/>
</dbReference>
<dbReference type="PANTHER" id="PTHR11730:SF32">
    <property type="entry name" value="AMMONIUM TRANSPORTER RH TYPE A"/>
    <property type="match status" value="1"/>
</dbReference>
<dbReference type="Pfam" id="PF00909">
    <property type="entry name" value="Ammonium_transp"/>
    <property type="match status" value="1"/>
</dbReference>
<dbReference type="PRINTS" id="PR00342">
    <property type="entry name" value="RHESUSRHD"/>
</dbReference>
<dbReference type="SUPFAM" id="SSF111352">
    <property type="entry name" value="Ammonium transporter"/>
    <property type="match status" value="1"/>
</dbReference>
<organism>
    <name type="scientific">Canis lupus familiaris</name>
    <name type="common">Dog</name>
    <name type="synonym">Canis familiaris</name>
    <dbReference type="NCBI Taxonomy" id="9615"/>
    <lineage>
        <taxon>Eukaryota</taxon>
        <taxon>Metazoa</taxon>
        <taxon>Chordata</taxon>
        <taxon>Craniata</taxon>
        <taxon>Vertebrata</taxon>
        <taxon>Euteleostomi</taxon>
        <taxon>Mammalia</taxon>
        <taxon>Eutheria</taxon>
        <taxon>Laurasiatheria</taxon>
        <taxon>Carnivora</taxon>
        <taxon>Caniformia</taxon>
        <taxon>Canidae</taxon>
        <taxon>Canis</taxon>
    </lineage>
</organism>
<accession>Q3BCQ5</accession>
<protein>
    <recommendedName>
        <fullName evidence="1">Ammonium transporter Rh type A</fullName>
    </recommendedName>
    <alternativeName>
        <fullName>Erythrocyte membrane glycoprotein Rh50</fullName>
    </alternativeName>
    <alternativeName>
        <fullName>Rhesus blood group family type A glycoprotein</fullName>
        <shortName>Rh family type A glycoprotein</shortName>
        <shortName>Rh type A glycoprotein</shortName>
    </alternativeName>
    <cdAntigenName>CD241</cdAntigenName>
</protein>
<evidence type="ECO:0000250" key="1">
    <source>
        <dbReference type="UniProtKB" id="Q02094"/>
    </source>
</evidence>
<evidence type="ECO:0000255" key="2"/>
<evidence type="ECO:0000305" key="3"/>
<comment type="function">
    <text evidence="1">Component of the ankyrin-1 complex, a multiprotein complex involved in the stability and shape of the erythrocyte membrane. Heterotrimer with RHCE (RHAG)2(RHCE), that transports ammonium and its related derivative methylammonium, in both neutral and ionic forms, across the erythrocyte membrane. The transport of NH4(+) is electrogenic and masks the NH3 transport. Also, may act as a CO2 channel. Moreover in erythrocyte, regulates RHD membrane expression and is associated with rhesus blood group antigen expression.</text>
</comment>
<comment type="catalytic activity">
    <reaction evidence="1">
        <text>methylamine(out) = methylamine(in)</text>
        <dbReference type="Rhea" id="RHEA:74391"/>
        <dbReference type="ChEBI" id="CHEBI:59338"/>
    </reaction>
</comment>
<comment type="catalytic activity">
    <reaction evidence="1">
        <text>NH4(+)(in) = NH4(+)(out)</text>
        <dbReference type="Rhea" id="RHEA:28747"/>
        <dbReference type="ChEBI" id="CHEBI:28938"/>
    </reaction>
</comment>
<comment type="catalytic activity">
    <reaction evidence="1">
        <text>CO2(out) = CO2(in)</text>
        <dbReference type="Rhea" id="RHEA:74891"/>
        <dbReference type="ChEBI" id="CHEBI:16526"/>
    </reaction>
</comment>
<comment type="subunit">
    <text evidence="1">Homodimer. Heterotrimer; a RHCE monomer interacts with a RHAG homodimer. Component of the ankyrin-1 complex in the erythrocyte, composed of ANK1, RHCE, RHAG, SLC4A1, EPB42, GYPA, GYPB and AQP1. Interacts with GYPB (via the N-terminal); this interaction bridges the (RHAG)2(RHCE) heterotrimer with the SLC4A1 Band 3 I dimer complexed with GYPA.</text>
</comment>
<comment type="subcellular location">
    <subcellularLocation>
        <location evidence="1">Membrane</location>
        <topology evidence="1">Multi-pass membrane protein</topology>
    </subcellularLocation>
    <text evidence="1">Localization at the plasma membrane is regulated by ANK1.</text>
</comment>
<comment type="PTM">
    <text evidence="1">Glycosylated.</text>
</comment>
<comment type="similarity">
    <text evidence="3">Belongs to the ammonium transporter (TC 2.A.49) family. Rh subfamily.</text>
</comment>
<name>RHAG_CANLF</name>
<reference key="1">
    <citation type="journal article" date="2005" name="Proc. Natl. Acad. Sci. U.S.A.">
        <title>Evolutionary conservation and diversification of Rh family genes and proteins.</title>
        <authorList>
            <person name="Huang C.-H."/>
            <person name="Peng J."/>
        </authorList>
    </citation>
    <scope>NUCLEOTIDE SEQUENCE [MRNA]</scope>
</reference>
<feature type="chain" id="PRO_0000380189" description="Ammonium transporter Rh type A">
    <location>
        <begin position="1"/>
        <end position="415"/>
    </location>
</feature>
<feature type="topological domain" description="Cytoplasmic" evidence="2">
    <location>
        <begin position="1"/>
        <end position="2"/>
    </location>
</feature>
<feature type="transmembrane region" description="Helical" evidence="2">
    <location>
        <begin position="3"/>
        <end position="23"/>
    </location>
</feature>
<feature type="topological domain" description="Extracellular" evidence="2">
    <location>
        <begin position="24"/>
        <end position="51"/>
    </location>
</feature>
<feature type="transmembrane region" description="Helical" evidence="2">
    <location>
        <begin position="52"/>
        <end position="72"/>
    </location>
</feature>
<feature type="topological domain" description="Cytoplasmic" evidence="2">
    <location>
        <begin position="73"/>
        <end position="76"/>
    </location>
</feature>
<feature type="transmembrane region" description="Helical" evidence="2">
    <location>
        <begin position="77"/>
        <end position="97"/>
    </location>
</feature>
<feature type="topological domain" description="Extracellular" evidence="2">
    <location>
        <begin position="98"/>
        <end position="115"/>
    </location>
</feature>
<feature type="transmembrane region" description="Helical" evidence="2">
    <location>
        <begin position="116"/>
        <end position="136"/>
    </location>
</feature>
<feature type="topological domain" description="Cytoplasmic" evidence="2">
    <location>
        <begin position="137"/>
        <end position="142"/>
    </location>
</feature>
<feature type="transmembrane region" description="Helical" evidence="2">
    <location>
        <begin position="143"/>
        <end position="163"/>
    </location>
</feature>
<feature type="topological domain" description="Extracellular" evidence="2">
    <location>
        <begin position="164"/>
        <end position="167"/>
    </location>
</feature>
<feature type="transmembrane region" description="Helical" evidence="2">
    <location>
        <begin position="168"/>
        <end position="188"/>
    </location>
</feature>
<feature type="topological domain" description="Cytoplasmic" evidence="2">
    <location>
        <begin position="189"/>
        <end position="208"/>
    </location>
</feature>
<feature type="transmembrane region" description="Helical" evidence="2">
    <location>
        <begin position="209"/>
        <end position="229"/>
    </location>
</feature>
<feature type="topological domain" description="Extracellular" evidence="2">
    <location>
        <begin position="230"/>
        <end position="236"/>
    </location>
</feature>
<feature type="transmembrane region" description="Helical" evidence="2">
    <location>
        <begin position="237"/>
        <end position="257"/>
    </location>
</feature>
<feature type="topological domain" description="Cytoplasmic" evidence="2">
    <location>
        <begin position="258"/>
        <end position="268"/>
    </location>
</feature>
<feature type="transmembrane region" description="Helical" evidence="2">
    <location>
        <begin position="269"/>
        <end position="287"/>
    </location>
</feature>
<feature type="topological domain" description="Extracellular" evidence="2">
    <location>
        <begin position="288"/>
        <end position="290"/>
    </location>
</feature>
<feature type="transmembrane region" description="Helical" evidence="2">
    <location>
        <begin position="291"/>
        <end position="311"/>
    </location>
</feature>
<feature type="topological domain" description="Cytoplasmic" evidence="2">
    <location>
        <begin position="312"/>
        <end position="332"/>
    </location>
</feature>
<feature type="transmembrane region" description="Helical" evidence="2">
    <location>
        <begin position="333"/>
        <end position="353"/>
    </location>
</feature>
<feature type="topological domain" description="Extracellular" evidence="2">
    <location>
        <begin position="354"/>
        <end position="363"/>
    </location>
</feature>
<feature type="transmembrane region" description="Helical" evidence="2">
    <location>
        <begin position="364"/>
        <end position="384"/>
    </location>
</feature>
<feature type="topological domain" description="Cytoplasmic" evidence="2">
    <location>
        <begin position="385"/>
        <end position="415"/>
    </location>
</feature>
<feature type="glycosylation site" description="N-linked (GlcNAc...) asparagine" evidence="2">
    <location>
        <position position="37"/>
    </location>
</feature>
<feature type="glycosylation site" description="N-linked (GlcNAc...) asparagine" evidence="2">
    <location>
        <position position="40"/>
    </location>
</feature>